<keyword id="KW-0413">Isomerase</keyword>
<keyword id="KW-0819">tRNA processing</keyword>
<gene>
    <name evidence="1" type="primary">truA</name>
    <name type="ordered locus">CF0846</name>
</gene>
<name>TRUA_CHLFF</name>
<dbReference type="EC" id="5.4.99.12" evidence="1"/>
<dbReference type="EMBL" id="AP006861">
    <property type="protein sequence ID" value="BAE81618.1"/>
    <property type="molecule type" value="Genomic_DNA"/>
</dbReference>
<dbReference type="RefSeq" id="WP_011458393.1">
    <property type="nucleotide sequence ID" value="NC_007899.1"/>
</dbReference>
<dbReference type="SMR" id="Q253C0"/>
<dbReference type="STRING" id="264202.CF0846"/>
<dbReference type="KEGG" id="cfe:CF0846"/>
<dbReference type="eggNOG" id="COG0101">
    <property type="taxonomic scope" value="Bacteria"/>
</dbReference>
<dbReference type="HOGENOM" id="CLU_014673_0_1_0"/>
<dbReference type="OrthoDB" id="9811823at2"/>
<dbReference type="Proteomes" id="UP000001260">
    <property type="component" value="Chromosome"/>
</dbReference>
<dbReference type="GO" id="GO:0003723">
    <property type="term" value="F:RNA binding"/>
    <property type="evidence" value="ECO:0007669"/>
    <property type="project" value="InterPro"/>
</dbReference>
<dbReference type="GO" id="GO:0160147">
    <property type="term" value="F:tRNA pseudouridine(38-40) synthase activity"/>
    <property type="evidence" value="ECO:0007669"/>
    <property type="project" value="UniProtKB-EC"/>
</dbReference>
<dbReference type="GO" id="GO:0031119">
    <property type="term" value="P:tRNA pseudouridine synthesis"/>
    <property type="evidence" value="ECO:0007669"/>
    <property type="project" value="UniProtKB-UniRule"/>
</dbReference>
<dbReference type="CDD" id="cd02570">
    <property type="entry name" value="PseudoU_synth_EcTruA"/>
    <property type="match status" value="1"/>
</dbReference>
<dbReference type="FunFam" id="3.30.70.580:FF:000001">
    <property type="entry name" value="tRNA pseudouridine synthase A"/>
    <property type="match status" value="1"/>
</dbReference>
<dbReference type="Gene3D" id="3.30.70.660">
    <property type="entry name" value="Pseudouridine synthase I, catalytic domain, C-terminal subdomain"/>
    <property type="match status" value="1"/>
</dbReference>
<dbReference type="Gene3D" id="3.30.70.580">
    <property type="entry name" value="Pseudouridine synthase I, catalytic domain, N-terminal subdomain"/>
    <property type="match status" value="1"/>
</dbReference>
<dbReference type="HAMAP" id="MF_00171">
    <property type="entry name" value="TruA"/>
    <property type="match status" value="1"/>
</dbReference>
<dbReference type="InterPro" id="IPR020103">
    <property type="entry name" value="PsdUridine_synth_cat_dom_sf"/>
</dbReference>
<dbReference type="InterPro" id="IPR001406">
    <property type="entry name" value="PsdUridine_synth_TruA"/>
</dbReference>
<dbReference type="InterPro" id="IPR020097">
    <property type="entry name" value="PsdUridine_synth_TruA_a/b_dom"/>
</dbReference>
<dbReference type="InterPro" id="IPR020095">
    <property type="entry name" value="PsdUridine_synth_TruA_C"/>
</dbReference>
<dbReference type="InterPro" id="IPR020094">
    <property type="entry name" value="TruA/RsuA/RluB/E/F_N"/>
</dbReference>
<dbReference type="NCBIfam" id="TIGR00071">
    <property type="entry name" value="hisT_truA"/>
    <property type="match status" value="1"/>
</dbReference>
<dbReference type="PANTHER" id="PTHR11142">
    <property type="entry name" value="PSEUDOURIDYLATE SYNTHASE"/>
    <property type="match status" value="1"/>
</dbReference>
<dbReference type="PANTHER" id="PTHR11142:SF0">
    <property type="entry name" value="TRNA PSEUDOURIDINE SYNTHASE-LIKE 1"/>
    <property type="match status" value="1"/>
</dbReference>
<dbReference type="Pfam" id="PF01416">
    <property type="entry name" value="PseudoU_synth_1"/>
    <property type="match status" value="2"/>
</dbReference>
<dbReference type="PIRSF" id="PIRSF001430">
    <property type="entry name" value="tRNA_psdUrid_synth"/>
    <property type="match status" value="1"/>
</dbReference>
<dbReference type="SUPFAM" id="SSF55120">
    <property type="entry name" value="Pseudouridine synthase"/>
    <property type="match status" value="1"/>
</dbReference>
<accession>Q253C0</accession>
<evidence type="ECO:0000255" key="1">
    <source>
        <dbReference type="HAMAP-Rule" id="MF_00171"/>
    </source>
</evidence>
<proteinExistence type="inferred from homology"/>
<reference key="1">
    <citation type="journal article" date="2006" name="DNA Res.">
        <title>Genome sequence of the cat pathogen, Chlamydophila felis.</title>
        <authorList>
            <person name="Azuma Y."/>
            <person name="Hirakawa H."/>
            <person name="Yamashita A."/>
            <person name="Cai Y."/>
            <person name="Rahman M.A."/>
            <person name="Suzuki H."/>
            <person name="Mitaku S."/>
            <person name="Toh H."/>
            <person name="Goto S."/>
            <person name="Murakami T."/>
            <person name="Sugi K."/>
            <person name="Hayashi H."/>
            <person name="Fukushi H."/>
            <person name="Hattori M."/>
            <person name="Kuhara S."/>
            <person name="Shirai M."/>
        </authorList>
    </citation>
    <scope>NUCLEOTIDE SEQUENCE [LARGE SCALE GENOMIC DNA]</scope>
    <source>
        <strain>Fe/C-56</strain>
    </source>
</reference>
<comment type="function">
    <text evidence="1">Formation of pseudouridine at positions 38, 39 and 40 in the anticodon stem and loop of transfer RNAs.</text>
</comment>
<comment type="catalytic activity">
    <reaction evidence="1">
        <text>uridine(38/39/40) in tRNA = pseudouridine(38/39/40) in tRNA</text>
        <dbReference type="Rhea" id="RHEA:22376"/>
        <dbReference type="Rhea" id="RHEA-COMP:10085"/>
        <dbReference type="Rhea" id="RHEA-COMP:10087"/>
        <dbReference type="ChEBI" id="CHEBI:65314"/>
        <dbReference type="ChEBI" id="CHEBI:65315"/>
        <dbReference type="EC" id="5.4.99.12"/>
    </reaction>
</comment>
<comment type="subunit">
    <text evidence="1">Homodimer.</text>
</comment>
<comment type="similarity">
    <text evidence="1">Belongs to the tRNA pseudouridine synthase TruA family.</text>
</comment>
<sequence>MKRVVLLLAYQGTAYAGWQRQPNDLSIQEVIESALARVLGKPIVVSSSGRTDSGVHAYGQVAHFSQPDHPLFSQPQSIKKMLNAILPKDIVIRDVVLSDVNFHARFSAIAKEYRYSLTRSPKPLPWQRYFAYYPRHSIKIDLMQKGAKYLLGTHDFASFANHGRDYTSTERTLFKLDIIDNEEIVTIICKGNGFLYKMVRNIVGSLLDISKEKYPPEYIQEILAQKSRRKGPPAAPSHALSLHHVCYPKPYNWFCTPECDINSLKEEK</sequence>
<feature type="chain" id="PRO_1000017067" description="tRNA pseudouridine synthase A">
    <location>
        <begin position="1"/>
        <end position="268"/>
    </location>
</feature>
<feature type="active site" description="Nucleophile" evidence="1">
    <location>
        <position position="52"/>
    </location>
</feature>
<feature type="binding site" evidence="1">
    <location>
        <position position="113"/>
    </location>
    <ligand>
        <name>substrate</name>
    </ligand>
</feature>
<protein>
    <recommendedName>
        <fullName evidence="1">tRNA pseudouridine synthase A</fullName>
        <ecNumber evidence="1">5.4.99.12</ecNumber>
    </recommendedName>
    <alternativeName>
        <fullName evidence="1">tRNA pseudouridine(38-40) synthase</fullName>
    </alternativeName>
    <alternativeName>
        <fullName evidence="1">tRNA pseudouridylate synthase I</fullName>
    </alternativeName>
    <alternativeName>
        <fullName evidence="1">tRNA-uridine isomerase I</fullName>
    </alternativeName>
</protein>
<organism>
    <name type="scientific">Chlamydia felis (strain Fe/C-56)</name>
    <name type="common">Chlamydophila felis</name>
    <dbReference type="NCBI Taxonomy" id="264202"/>
    <lineage>
        <taxon>Bacteria</taxon>
        <taxon>Pseudomonadati</taxon>
        <taxon>Chlamydiota</taxon>
        <taxon>Chlamydiia</taxon>
        <taxon>Chlamydiales</taxon>
        <taxon>Chlamydiaceae</taxon>
        <taxon>Chlamydia/Chlamydophila group</taxon>
        <taxon>Chlamydia</taxon>
    </lineage>
</organism>